<accession>Q7U330</accession>
<dbReference type="EC" id="5.4.99.25" evidence="1"/>
<dbReference type="EMBL" id="AE017125">
    <property type="protein sequence ID" value="AAP76721.1"/>
    <property type="molecule type" value="Genomic_DNA"/>
</dbReference>
<dbReference type="RefSeq" id="WP_011114967.1">
    <property type="nucleotide sequence ID" value="NC_004917.1"/>
</dbReference>
<dbReference type="SMR" id="Q7U330"/>
<dbReference type="STRING" id="235279.HH_0124"/>
<dbReference type="KEGG" id="hhe:HH_0124"/>
<dbReference type="eggNOG" id="COG0130">
    <property type="taxonomic scope" value="Bacteria"/>
</dbReference>
<dbReference type="HOGENOM" id="CLU_032087_2_0_7"/>
<dbReference type="OrthoDB" id="9802309at2"/>
<dbReference type="Proteomes" id="UP000002495">
    <property type="component" value="Chromosome"/>
</dbReference>
<dbReference type="GO" id="GO:0003723">
    <property type="term" value="F:RNA binding"/>
    <property type="evidence" value="ECO:0007669"/>
    <property type="project" value="InterPro"/>
</dbReference>
<dbReference type="GO" id="GO:0160148">
    <property type="term" value="F:tRNA pseudouridine(55) synthase activity"/>
    <property type="evidence" value="ECO:0007669"/>
    <property type="project" value="UniProtKB-EC"/>
</dbReference>
<dbReference type="GO" id="GO:1990481">
    <property type="term" value="P:mRNA pseudouridine synthesis"/>
    <property type="evidence" value="ECO:0007669"/>
    <property type="project" value="TreeGrafter"/>
</dbReference>
<dbReference type="GO" id="GO:0031119">
    <property type="term" value="P:tRNA pseudouridine synthesis"/>
    <property type="evidence" value="ECO:0007669"/>
    <property type="project" value="UniProtKB-UniRule"/>
</dbReference>
<dbReference type="Gene3D" id="3.30.2350.10">
    <property type="entry name" value="Pseudouridine synthase"/>
    <property type="match status" value="1"/>
</dbReference>
<dbReference type="HAMAP" id="MF_01080">
    <property type="entry name" value="TruB_bact"/>
    <property type="match status" value="1"/>
</dbReference>
<dbReference type="InterPro" id="IPR020103">
    <property type="entry name" value="PsdUridine_synth_cat_dom_sf"/>
</dbReference>
<dbReference type="InterPro" id="IPR002501">
    <property type="entry name" value="PsdUridine_synth_N"/>
</dbReference>
<dbReference type="InterPro" id="IPR014780">
    <property type="entry name" value="tRNA_psdUridine_synth_TruB"/>
</dbReference>
<dbReference type="NCBIfam" id="TIGR00431">
    <property type="entry name" value="TruB"/>
    <property type="match status" value="1"/>
</dbReference>
<dbReference type="PANTHER" id="PTHR13767:SF2">
    <property type="entry name" value="PSEUDOURIDYLATE SYNTHASE TRUB1"/>
    <property type="match status" value="1"/>
</dbReference>
<dbReference type="PANTHER" id="PTHR13767">
    <property type="entry name" value="TRNA-PSEUDOURIDINE SYNTHASE"/>
    <property type="match status" value="1"/>
</dbReference>
<dbReference type="Pfam" id="PF01509">
    <property type="entry name" value="TruB_N"/>
    <property type="match status" value="1"/>
</dbReference>
<dbReference type="SUPFAM" id="SSF55120">
    <property type="entry name" value="Pseudouridine synthase"/>
    <property type="match status" value="1"/>
</dbReference>
<feature type="chain" id="PRO_0000121845" description="tRNA pseudouridine synthase B">
    <location>
        <begin position="1"/>
        <end position="284"/>
    </location>
</feature>
<feature type="active site" description="Nucleophile" evidence="1">
    <location>
        <position position="40"/>
    </location>
</feature>
<reference key="1">
    <citation type="journal article" date="2003" name="Proc. Natl. Acad. Sci. U.S.A.">
        <title>The complete genome sequence of the carcinogenic bacterium Helicobacter hepaticus.</title>
        <authorList>
            <person name="Suerbaum S."/>
            <person name="Josenhans C."/>
            <person name="Sterzenbach T."/>
            <person name="Drescher B."/>
            <person name="Brandt P."/>
            <person name="Bell M."/>
            <person name="Droege M."/>
            <person name="Fartmann B."/>
            <person name="Fischer H.-P."/>
            <person name="Ge Z."/>
            <person name="Hoerster A."/>
            <person name="Holland R."/>
            <person name="Klein K."/>
            <person name="Koenig J."/>
            <person name="Macko L."/>
            <person name="Mendz G.L."/>
            <person name="Nyakatura G."/>
            <person name="Schauer D.B."/>
            <person name="Shen Z."/>
            <person name="Weber J."/>
            <person name="Frosch M."/>
            <person name="Fox J.G."/>
        </authorList>
    </citation>
    <scope>NUCLEOTIDE SEQUENCE [LARGE SCALE GENOMIC DNA]</scope>
    <source>
        <strain>ATCC 51449 / 3B1</strain>
    </source>
</reference>
<evidence type="ECO:0000255" key="1">
    <source>
        <dbReference type="HAMAP-Rule" id="MF_01080"/>
    </source>
</evidence>
<name>TRUB_HELHP</name>
<organism>
    <name type="scientific">Helicobacter hepaticus (strain ATCC 51449 / 3B1)</name>
    <dbReference type="NCBI Taxonomy" id="235279"/>
    <lineage>
        <taxon>Bacteria</taxon>
        <taxon>Pseudomonadati</taxon>
        <taxon>Campylobacterota</taxon>
        <taxon>Epsilonproteobacteria</taxon>
        <taxon>Campylobacterales</taxon>
        <taxon>Helicobacteraceae</taxon>
        <taxon>Helicobacter</taxon>
    </lineage>
</organism>
<gene>
    <name evidence="1" type="primary">truB</name>
    <name type="ordered locus">HH_0124</name>
</gene>
<protein>
    <recommendedName>
        <fullName evidence="1">tRNA pseudouridine synthase B</fullName>
        <ecNumber evidence="1">5.4.99.25</ecNumber>
    </recommendedName>
    <alternativeName>
        <fullName evidence="1">tRNA pseudouridine(55) synthase</fullName>
        <shortName evidence="1">Psi55 synthase</shortName>
    </alternativeName>
    <alternativeName>
        <fullName evidence="1">tRNA pseudouridylate synthase</fullName>
    </alternativeName>
    <alternativeName>
        <fullName evidence="1">tRNA-uridine isomerase</fullName>
    </alternativeName>
</protein>
<keyword id="KW-0413">Isomerase</keyword>
<keyword id="KW-1185">Reference proteome</keyword>
<keyword id="KW-0819">tRNA processing</keyword>
<comment type="function">
    <text evidence="1">Responsible for synthesis of pseudouridine from uracil-55 in the psi GC loop of transfer RNAs.</text>
</comment>
<comment type="catalytic activity">
    <reaction evidence="1">
        <text>uridine(55) in tRNA = pseudouridine(55) in tRNA</text>
        <dbReference type="Rhea" id="RHEA:42532"/>
        <dbReference type="Rhea" id="RHEA-COMP:10101"/>
        <dbReference type="Rhea" id="RHEA-COMP:10102"/>
        <dbReference type="ChEBI" id="CHEBI:65314"/>
        <dbReference type="ChEBI" id="CHEBI:65315"/>
        <dbReference type="EC" id="5.4.99.25"/>
    </reaction>
</comment>
<comment type="similarity">
    <text evidence="1">Belongs to the pseudouridine synthase TruB family. Type 1 subfamily.</text>
</comment>
<sequence length="284" mass="32153">MANALLVAAYKPPFLSSNACLSRLKKHFGMSKAGYLGTLDPFAKGVLVVGFGSYTRLFPHLQKVPKAYRATLWLGAKSASLDIEHIESIEIIPEYNQSDIEKILFSLKGTFDYTPPAFSAKHINGQRAYKLAREGKVFTLQQIQMSIYNITLLSYHHPFVHFEVSVSEGAYVRSIGEIIAKKLGVNGVLSSLERISEGQMSVSATEQIRILNPLEYLPYPQLENMHRFSKQMYDGKKITLKNAQKGKYIVCFEDFFSIIEIFSNGGIQYILNRIEYVDTFKKTR</sequence>
<proteinExistence type="inferred from homology"/>